<comment type="miscellaneous">
    <text>This gene belongs to a multigene family expressed in a large variety of tumors whereas in normal tissues, expression is restricted to germ cells. These genes organized in clustered repeats, have a high degree of predicted sequence identity, but differ by scattered single nucleotide substitution. Their sequences contain either the antigenic peptide YYWPRPRRY or YRPRPRRY which is recognized by cytotoxic T-cells.</text>
</comment>
<comment type="similarity">
    <text evidence="2">Belongs to the GAGE family.</text>
</comment>
<comment type="caution">
    <text evidence="2">The first GAGE nomenclature was based on identified mRNA sequences, but the high identity of the GAGE members made impossible to separate products of paralogous genes from polymorph products. PubMed:18179644 presented a new GAGE gene nomenclature based on the identified genes and their products.</text>
</comment>
<accession>A6NDE8</accession>
<name>GG12H_HUMAN</name>
<organism>
    <name type="scientific">Homo sapiens</name>
    <name type="common">Human</name>
    <dbReference type="NCBI Taxonomy" id="9606"/>
    <lineage>
        <taxon>Eukaryota</taxon>
        <taxon>Metazoa</taxon>
        <taxon>Chordata</taxon>
        <taxon>Craniata</taxon>
        <taxon>Vertebrata</taxon>
        <taxon>Euteleostomi</taxon>
        <taxon>Mammalia</taxon>
        <taxon>Eutheria</taxon>
        <taxon>Euarchontoglires</taxon>
        <taxon>Primates</taxon>
        <taxon>Haplorrhini</taxon>
        <taxon>Catarrhini</taxon>
        <taxon>Hominidae</taxon>
        <taxon>Homo</taxon>
    </lineage>
</organism>
<feature type="chain" id="PRO_0000339404" description="G antigen 12H">
    <location>
        <begin position="1"/>
        <end position="117"/>
    </location>
</feature>
<feature type="region of interest" description="Disordered" evidence="1">
    <location>
        <begin position="1"/>
        <end position="117"/>
    </location>
</feature>
<feature type="compositionally biased region" description="Acidic residues" evidence="1">
    <location>
        <begin position="32"/>
        <end position="45"/>
    </location>
</feature>
<feature type="compositionally biased region" description="Acidic residues" evidence="1">
    <location>
        <begin position="87"/>
        <end position="96"/>
    </location>
</feature>
<feature type="compositionally biased region" description="Basic and acidic residues" evidence="1">
    <location>
        <begin position="103"/>
        <end position="117"/>
    </location>
</feature>
<reference key="1">
    <citation type="journal article" date="2005" name="Nature">
        <title>The DNA sequence of the human X chromosome.</title>
        <authorList>
            <person name="Ross M.T."/>
            <person name="Grafham D.V."/>
            <person name="Coffey A.J."/>
            <person name="Scherer S."/>
            <person name="McLay K."/>
            <person name="Muzny D."/>
            <person name="Platzer M."/>
            <person name="Howell G.R."/>
            <person name="Burrows C."/>
            <person name="Bird C.P."/>
            <person name="Frankish A."/>
            <person name="Lovell F.L."/>
            <person name="Howe K.L."/>
            <person name="Ashurst J.L."/>
            <person name="Fulton R.S."/>
            <person name="Sudbrak R."/>
            <person name="Wen G."/>
            <person name="Jones M.C."/>
            <person name="Hurles M.E."/>
            <person name="Andrews T.D."/>
            <person name="Scott C.E."/>
            <person name="Searle S."/>
            <person name="Ramser J."/>
            <person name="Whittaker A."/>
            <person name="Deadman R."/>
            <person name="Carter N.P."/>
            <person name="Hunt S.E."/>
            <person name="Chen R."/>
            <person name="Cree A."/>
            <person name="Gunaratne P."/>
            <person name="Havlak P."/>
            <person name="Hodgson A."/>
            <person name="Metzker M.L."/>
            <person name="Richards S."/>
            <person name="Scott G."/>
            <person name="Steffen D."/>
            <person name="Sodergren E."/>
            <person name="Wheeler D.A."/>
            <person name="Worley K.C."/>
            <person name="Ainscough R."/>
            <person name="Ambrose K.D."/>
            <person name="Ansari-Lari M.A."/>
            <person name="Aradhya S."/>
            <person name="Ashwell R.I."/>
            <person name="Babbage A.K."/>
            <person name="Bagguley C.L."/>
            <person name="Ballabio A."/>
            <person name="Banerjee R."/>
            <person name="Barker G.E."/>
            <person name="Barlow K.F."/>
            <person name="Barrett I.P."/>
            <person name="Bates K.N."/>
            <person name="Beare D.M."/>
            <person name="Beasley H."/>
            <person name="Beasley O."/>
            <person name="Beck A."/>
            <person name="Bethel G."/>
            <person name="Blechschmidt K."/>
            <person name="Brady N."/>
            <person name="Bray-Allen S."/>
            <person name="Bridgeman A.M."/>
            <person name="Brown A.J."/>
            <person name="Brown M.J."/>
            <person name="Bonnin D."/>
            <person name="Bruford E.A."/>
            <person name="Buhay C."/>
            <person name="Burch P."/>
            <person name="Burford D."/>
            <person name="Burgess J."/>
            <person name="Burrill W."/>
            <person name="Burton J."/>
            <person name="Bye J.M."/>
            <person name="Carder C."/>
            <person name="Carrel L."/>
            <person name="Chako J."/>
            <person name="Chapman J.C."/>
            <person name="Chavez D."/>
            <person name="Chen E."/>
            <person name="Chen G."/>
            <person name="Chen Y."/>
            <person name="Chen Z."/>
            <person name="Chinault C."/>
            <person name="Ciccodicola A."/>
            <person name="Clark S.Y."/>
            <person name="Clarke G."/>
            <person name="Clee C.M."/>
            <person name="Clegg S."/>
            <person name="Clerc-Blankenburg K."/>
            <person name="Clifford K."/>
            <person name="Cobley V."/>
            <person name="Cole C.G."/>
            <person name="Conquer J.S."/>
            <person name="Corby N."/>
            <person name="Connor R.E."/>
            <person name="David R."/>
            <person name="Davies J."/>
            <person name="Davis C."/>
            <person name="Davis J."/>
            <person name="Delgado O."/>
            <person name="Deshazo D."/>
            <person name="Dhami P."/>
            <person name="Ding Y."/>
            <person name="Dinh H."/>
            <person name="Dodsworth S."/>
            <person name="Draper H."/>
            <person name="Dugan-Rocha S."/>
            <person name="Dunham A."/>
            <person name="Dunn M."/>
            <person name="Durbin K.J."/>
            <person name="Dutta I."/>
            <person name="Eades T."/>
            <person name="Ellwood M."/>
            <person name="Emery-Cohen A."/>
            <person name="Errington H."/>
            <person name="Evans K.L."/>
            <person name="Faulkner L."/>
            <person name="Francis F."/>
            <person name="Frankland J."/>
            <person name="Fraser A.E."/>
            <person name="Galgoczy P."/>
            <person name="Gilbert J."/>
            <person name="Gill R."/>
            <person name="Gloeckner G."/>
            <person name="Gregory S.G."/>
            <person name="Gribble S."/>
            <person name="Griffiths C."/>
            <person name="Grocock R."/>
            <person name="Gu Y."/>
            <person name="Gwilliam R."/>
            <person name="Hamilton C."/>
            <person name="Hart E.A."/>
            <person name="Hawes A."/>
            <person name="Heath P.D."/>
            <person name="Heitmann K."/>
            <person name="Hennig S."/>
            <person name="Hernandez J."/>
            <person name="Hinzmann B."/>
            <person name="Ho S."/>
            <person name="Hoffs M."/>
            <person name="Howden P.J."/>
            <person name="Huckle E.J."/>
            <person name="Hume J."/>
            <person name="Hunt P.J."/>
            <person name="Hunt A.R."/>
            <person name="Isherwood J."/>
            <person name="Jacob L."/>
            <person name="Johnson D."/>
            <person name="Jones S."/>
            <person name="de Jong P.J."/>
            <person name="Joseph S.S."/>
            <person name="Keenan S."/>
            <person name="Kelly S."/>
            <person name="Kershaw J.K."/>
            <person name="Khan Z."/>
            <person name="Kioschis P."/>
            <person name="Klages S."/>
            <person name="Knights A.J."/>
            <person name="Kosiura A."/>
            <person name="Kovar-Smith C."/>
            <person name="Laird G.K."/>
            <person name="Langford C."/>
            <person name="Lawlor S."/>
            <person name="Leversha M."/>
            <person name="Lewis L."/>
            <person name="Liu W."/>
            <person name="Lloyd C."/>
            <person name="Lloyd D.M."/>
            <person name="Loulseged H."/>
            <person name="Loveland J.E."/>
            <person name="Lovell J.D."/>
            <person name="Lozado R."/>
            <person name="Lu J."/>
            <person name="Lyne R."/>
            <person name="Ma J."/>
            <person name="Maheshwari M."/>
            <person name="Matthews L.H."/>
            <person name="McDowall J."/>
            <person name="McLaren S."/>
            <person name="McMurray A."/>
            <person name="Meidl P."/>
            <person name="Meitinger T."/>
            <person name="Milne S."/>
            <person name="Miner G."/>
            <person name="Mistry S.L."/>
            <person name="Morgan M."/>
            <person name="Morris S."/>
            <person name="Mueller I."/>
            <person name="Mullikin J.C."/>
            <person name="Nguyen N."/>
            <person name="Nordsiek G."/>
            <person name="Nyakatura G."/>
            <person name="O'dell C.N."/>
            <person name="Okwuonu G."/>
            <person name="Palmer S."/>
            <person name="Pandian R."/>
            <person name="Parker D."/>
            <person name="Parrish J."/>
            <person name="Pasternak S."/>
            <person name="Patel D."/>
            <person name="Pearce A.V."/>
            <person name="Pearson D.M."/>
            <person name="Pelan S.E."/>
            <person name="Perez L."/>
            <person name="Porter K.M."/>
            <person name="Ramsey Y."/>
            <person name="Reichwald K."/>
            <person name="Rhodes S."/>
            <person name="Ridler K.A."/>
            <person name="Schlessinger D."/>
            <person name="Schueler M.G."/>
            <person name="Sehra H.K."/>
            <person name="Shaw-Smith C."/>
            <person name="Shen H."/>
            <person name="Sheridan E.M."/>
            <person name="Shownkeen R."/>
            <person name="Skuce C.D."/>
            <person name="Smith M.L."/>
            <person name="Sotheran E.C."/>
            <person name="Steingruber H.E."/>
            <person name="Steward C.A."/>
            <person name="Storey R."/>
            <person name="Swann R.M."/>
            <person name="Swarbreck D."/>
            <person name="Tabor P.E."/>
            <person name="Taudien S."/>
            <person name="Taylor T."/>
            <person name="Teague B."/>
            <person name="Thomas K."/>
            <person name="Thorpe A."/>
            <person name="Timms K."/>
            <person name="Tracey A."/>
            <person name="Trevanion S."/>
            <person name="Tromans A.C."/>
            <person name="d'Urso M."/>
            <person name="Verduzco D."/>
            <person name="Villasana D."/>
            <person name="Waldron L."/>
            <person name="Wall M."/>
            <person name="Wang Q."/>
            <person name="Warren J."/>
            <person name="Warry G.L."/>
            <person name="Wei X."/>
            <person name="West A."/>
            <person name="Whitehead S.L."/>
            <person name="Whiteley M.N."/>
            <person name="Wilkinson J.E."/>
            <person name="Willey D.L."/>
            <person name="Williams G."/>
            <person name="Williams L."/>
            <person name="Williamson A."/>
            <person name="Williamson H."/>
            <person name="Wilming L."/>
            <person name="Woodmansey R.L."/>
            <person name="Wray P.W."/>
            <person name="Yen J."/>
            <person name="Zhang J."/>
            <person name="Zhou J."/>
            <person name="Zoghbi H."/>
            <person name="Zorilla S."/>
            <person name="Buck D."/>
            <person name="Reinhardt R."/>
            <person name="Poustka A."/>
            <person name="Rosenthal A."/>
            <person name="Lehrach H."/>
            <person name="Meindl A."/>
            <person name="Minx P.J."/>
            <person name="Hillier L.W."/>
            <person name="Willard H.F."/>
            <person name="Wilson R.K."/>
            <person name="Waterston R.H."/>
            <person name="Rice C.M."/>
            <person name="Vaudin M."/>
            <person name="Coulson A."/>
            <person name="Nelson D.L."/>
            <person name="Weinstock G."/>
            <person name="Sulston J.E."/>
            <person name="Durbin R.M."/>
            <person name="Hubbard T."/>
            <person name="Gibbs R.A."/>
            <person name="Beck S."/>
            <person name="Rogers J."/>
            <person name="Bentley D.R."/>
        </authorList>
    </citation>
    <scope>NUCLEOTIDE SEQUENCE [LARGE SCALE GENOMIC DNA]</scope>
</reference>
<reference key="2">
    <citation type="journal article" date="2008" name="Tissue Antigens">
        <title>An overview of the GAGE cancer/testis antigen family with the inclusion of newly identified members.</title>
        <authorList>
            <person name="Gjerstorff M.F."/>
            <person name="Ditzel H.J."/>
        </authorList>
    </citation>
    <scope>GAGE FAMILY</scope>
</reference>
<proteinExistence type="inferred from homology"/>
<gene>
    <name type="primary">GAGE12H</name>
</gene>
<protein>
    <recommendedName>
        <fullName>G antigen 12H</fullName>
        <shortName>GAGE-12H</shortName>
    </recommendedName>
</protein>
<keyword id="KW-1185">Reference proteome</keyword>
<evidence type="ECO:0000256" key="1">
    <source>
        <dbReference type="SAM" id="MobiDB-lite"/>
    </source>
</evidence>
<evidence type="ECO:0000305" key="2"/>
<sequence length="117" mass="12924">MSWRGRSTYYWPRPRRYVQPPEMIGPMRPEQFSDEVEPATPEEGEPATQCQDPAAAQKGEDEGASAGQGPKPEAHSQEQGHPQTGCECEDGPDGQEMDPPNPEEVKTPEEGEKQSQC</sequence>
<dbReference type="EMBL" id="AC142497">
    <property type="status" value="NOT_ANNOTATED_CDS"/>
    <property type="molecule type" value="Genomic_DNA"/>
</dbReference>
<dbReference type="CCDS" id="CCDS43948.1"/>
<dbReference type="RefSeq" id="NP_001091880.1">
    <property type="nucleotide sequence ID" value="NM_001098410.3"/>
</dbReference>
<dbReference type="STRING" id="9606.ENSP00000371141"/>
<dbReference type="iPTMnet" id="A6NDE8"/>
<dbReference type="PhosphoSitePlus" id="A6NDE8"/>
<dbReference type="BioMuta" id="GAGE12H"/>
<dbReference type="jPOST" id="A6NDE8"/>
<dbReference type="MassIVE" id="A6NDE8"/>
<dbReference type="PaxDb" id="9606-ENSP00000371141"/>
<dbReference type="PeptideAtlas" id="A6NDE8"/>
<dbReference type="ProteomicsDB" id="905"/>
<dbReference type="Pumba" id="A6NDE8"/>
<dbReference type="TopDownProteomics" id="A6NDE8"/>
<dbReference type="Antibodypedia" id="57026">
    <property type="antibodies" value="50 antibodies from 9 providers"/>
</dbReference>
<dbReference type="DNASU" id="729442"/>
<dbReference type="Ensembl" id="ENST00000381722.2">
    <property type="protein sequence ID" value="ENSP00000371141.1"/>
    <property type="gene ID" value="ENSG00000224902.6"/>
</dbReference>
<dbReference type="GeneID" id="729442"/>
<dbReference type="KEGG" id="hsa:729442"/>
<dbReference type="MANE-Select" id="ENST00000381722.2">
    <property type="protein sequence ID" value="ENSP00000371141.1"/>
    <property type="RefSeq nucleotide sequence ID" value="NM_001098410.3"/>
    <property type="RefSeq protein sequence ID" value="NP_001091880.1"/>
</dbReference>
<dbReference type="UCSC" id="uc004doh.5">
    <property type="organism name" value="human"/>
</dbReference>
<dbReference type="AGR" id="HGNC:31908"/>
<dbReference type="CTD" id="729442"/>
<dbReference type="GeneCards" id="GAGE12H"/>
<dbReference type="HGNC" id="HGNC:31908">
    <property type="gene designation" value="GAGE12H"/>
</dbReference>
<dbReference type="HPA" id="ENSG00000224902">
    <property type="expression patterns" value="Tissue enriched (testis)"/>
</dbReference>
<dbReference type="MIM" id="300732">
    <property type="type" value="gene"/>
</dbReference>
<dbReference type="neXtProt" id="NX_A6NDE8"/>
<dbReference type="PharmGKB" id="PA145148780"/>
<dbReference type="VEuPathDB" id="HostDB:ENSG00000224902"/>
<dbReference type="eggNOG" id="ENOG502SZ68">
    <property type="taxonomic scope" value="Eukaryota"/>
</dbReference>
<dbReference type="GeneTree" id="ENSGT00940000153097"/>
<dbReference type="HOGENOM" id="CLU_150116_0_0_1"/>
<dbReference type="InParanoid" id="A6NDE8"/>
<dbReference type="OrthoDB" id="9539459at2759"/>
<dbReference type="PAN-GO" id="A6NDE8">
    <property type="GO annotations" value="0 GO annotations based on evolutionary models"/>
</dbReference>
<dbReference type="PhylomeDB" id="A6NDE8"/>
<dbReference type="TreeFam" id="TF340669"/>
<dbReference type="PathwayCommons" id="A6NDE8"/>
<dbReference type="BioGRID-ORCS" id="729442">
    <property type="hits" value="34 hits in 599 CRISPR screens"/>
</dbReference>
<dbReference type="GenomeRNAi" id="729442"/>
<dbReference type="Pharos" id="A6NDE8">
    <property type="development level" value="Tdark"/>
</dbReference>
<dbReference type="PRO" id="PR:A6NDE8"/>
<dbReference type="Proteomes" id="UP000005640">
    <property type="component" value="Chromosome X"/>
</dbReference>
<dbReference type="RNAct" id="A6NDE8">
    <property type="molecule type" value="protein"/>
</dbReference>
<dbReference type="Bgee" id="ENSG00000224902">
    <property type="expression patterns" value="Expressed in male germ line stem cell (sensu Vertebrata) in testis and 31 other cell types or tissues"/>
</dbReference>
<dbReference type="InterPro" id="IPR031320">
    <property type="entry name" value="GAGE"/>
</dbReference>
<dbReference type="InterPro" id="IPR008625">
    <property type="entry name" value="GAGE_fam"/>
</dbReference>
<dbReference type="PANTHER" id="PTHR14047:SF30">
    <property type="entry name" value="G ANTIGEN 1-RELATED"/>
    <property type="match status" value="1"/>
</dbReference>
<dbReference type="PANTHER" id="PTHR14047">
    <property type="entry name" value="P ANTIGEN FAMILY MEMBER 5-RELATED"/>
    <property type="match status" value="1"/>
</dbReference>
<dbReference type="Pfam" id="PF05831">
    <property type="entry name" value="GAGE"/>
    <property type="match status" value="1"/>
</dbReference>
<dbReference type="SMART" id="SM01379">
    <property type="entry name" value="GAGE"/>
    <property type="match status" value="1"/>
</dbReference>